<protein>
    <recommendedName>
        <fullName>Uncharacterized ABC transporter ATP-binding protein BB_0318</fullName>
    </recommendedName>
</protein>
<reference key="1">
    <citation type="journal article" date="1997" name="Nature">
        <title>Genomic sequence of a Lyme disease spirochaete, Borrelia burgdorferi.</title>
        <authorList>
            <person name="Fraser C.M."/>
            <person name="Casjens S."/>
            <person name="Huang W.M."/>
            <person name="Sutton G.G."/>
            <person name="Clayton R.A."/>
            <person name="Lathigra R."/>
            <person name="White O."/>
            <person name="Ketchum K.A."/>
            <person name="Dodson R.J."/>
            <person name="Hickey E.K."/>
            <person name="Gwinn M.L."/>
            <person name="Dougherty B.A."/>
            <person name="Tomb J.-F."/>
            <person name="Fleischmann R.D."/>
            <person name="Richardson D.L."/>
            <person name="Peterson J.D."/>
            <person name="Kerlavage A.R."/>
            <person name="Quackenbush J."/>
            <person name="Salzberg S.L."/>
            <person name="Hanson M."/>
            <person name="van Vugt R."/>
            <person name="Palmer N."/>
            <person name="Adams M.D."/>
            <person name="Gocayne J.D."/>
            <person name="Weidman J.F."/>
            <person name="Utterback T.R."/>
            <person name="Watthey L."/>
            <person name="McDonald L.A."/>
            <person name="Artiach P."/>
            <person name="Bowman C."/>
            <person name="Garland S.A."/>
            <person name="Fujii C."/>
            <person name="Cotton M.D."/>
            <person name="Horst K."/>
            <person name="Roberts K.M."/>
            <person name="Hatch B."/>
            <person name="Smith H.O."/>
            <person name="Venter J.C."/>
        </authorList>
    </citation>
    <scope>NUCLEOTIDE SEQUENCE [LARGE SCALE GENOMIC DNA]</scope>
    <source>
        <strain>ATCC 35210 / DSM 4680 / CIP 102532 / B31</strain>
    </source>
</reference>
<reference key="2">
    <citation type="submission" date="1994-08" db="EMBL/GenBank/DDBJ databases">
        <title>Use of PhoA gene fusions and anchored PCR to identify and express Borrelia burgdorferi candidate outer membrane proteins.</title>
        <authorList>
            <person name="Akins D.R."/>
            <person name="Popova T."/>
            <person name="Brusca J."/>
            <person name="Goldberg M.L."/>
            <person name="Li M."/>
            <person name="Baker S.C."/>
            <person name="Norgard M.V."/>
            <person name="Radolf J.D."/>
        </authorList>
    </citation>
    <scope>NUCLEOTIDE SEQUENCE [GENOMIC DNA] OF 347-421</scope>
    <source>
        <strain>ATCC 53899 / 297</strain>
    </source>
</reference>
<organism>
    <name type="scientific">Borreliella burgdorferi (strain ATCC 35210 / DSM 4680 / CIP 102532 / B31)</name>
    <name type="common">Borrelia burgdorferi</name>
    <dbReference type="NCBI Taxonomy" id="224326"/>
    <lineage>
        <taxon>Bacteria</taxon>
        <taxon>Pseudomonadati</taxon>
        <taxon>Spirochaetota</taxon>
        <taxon>Spirochaetia</taxon>
        <taxon>Spirochaetales</taxon>
        <taxon>Borreliaceae</taxon>
        <taxon>Borreliella</taxon>
    </lineage>
</organism>
<accession>Q44848</accession>
<comment type="similarity">
    <text evidence="2">Belongs to the ABC transporter superfamily.</text>
</comment>
<proteinExistence type="inferred from homology"/>
<dbReference type="EMBL" id="AE000783">
    <property type="protein sequence ID" value="AAC66693.1"/>
    <property type="molecule type" value="Genomic_DNA"/>
</dbReference>
<dbReference type="EMBL" id="L31422">
    <property type="protein sequence ID" value="AAA64899.1"/>
    <property type="molecule type" value="Genomic_DNA"/>
</dbReference>
<dbReference type="PIR" id="E70139">
    <property type="entry name" value="E70139"/>
</dbReference>
<dbReference type="RefSeq" id="NP_212452.1">
    <property type="nucleotide sequence ID" value="NC_001318.1"/>
</dbReference>
<dbReference type="RefSeq" id="WP_002661849.1">
    <property type="nucleotide sequence ID" value="NC_001318.1"/>
</dbReference>
<dbReference type="SMR" id="Q44848"/>
<dbReference type="STRING" id="224326.BB_0318"/>
<dbReference type="PaxDb" id="224326-BB_0318"/>
<dbReference type="EnsemblBacteria" id="AAC66693">
    <property type="protein sequence ID" value="AAC66693"/>
    <property type="gene ID" value="BB_0318"/>
</dbReference>
<dbReference type="KEGG" id="bbu:BB_0318"/>
<dbReference type="PATRIC" id="fig|224326.49.peg.716"/>
<dbReference type="HOGENOM" id="CLU_000604_92_3_12"/>
<dbReference type="OrthoDB" id="9760950at2"/>
<dbReference type="Proteomes" id="UP000001807">
    <property type="component" value="Chromosome"/>
</dbReference>
<dbReference type="GO" id="GO:0005524">
    <property type="term" value="F:ATP binding"/>
    <property type="evidence" value="ECO:0007669"/>
    <property type="project" value="UniProtKB-KW"/>
</dbReference>
<dbReference type="GO" id="GO:0016887">
    <property type="term" value="F:ATP hydrolysis activity"/>
    <property type="evidence" value="ECO:0007669"/>
    <property type="project" value="InterPro"/>
</dbReference>
<dbReference type="CDD" id="cd03216">
    <property type="entry name" value="ABC_Carb_Monos_I"/>
    <property type="match status" value="1"/>
</dbReference>
<dbReference type="Gene3D" id="3.40.50.300">
    <property type="entry name" value="P-loop containing nucleotide triphosphate hydrolases"/>
    <property type="match status" value="2"/>
</dbReference>
<dbReference type="InterPro" id="IPR050107">
    <property type="entry name" value="ABC_carbohydrate_import_ATPase"/>
</dbReference>
<dbReference type="InterPro" id="IPR003439">
    <property type="entry name" value="ABC_transporter-like_ATP-bd"/>
</dbReference>
<dbReference type="InterPro" id="IPR027417">
    <property type="entry name" value="P-loop_NTPase"/>
</dbReference>
<dbReference type="PANTHER" id="PTHR43790">
    <property type="entry name" value="CARBOHYDRATE TRANSPORT ATP-BINDING PROTEIN MG119-RELATED"/>
    <property type="match status" value="1"/>
</dbReference>
<dbReference type="PANTHER" id="PTHR43790:SF8">
    <property type="entry name" value="SUGAR ABC TRANSPORTER ATP-BINDING PROTEIN"/>
    <property type="match status" value="1"/>
</dbReference>
<dbReference type="Pfam" id="PF00005">
    <property type="entry name" value="ABC_tran"/>
    <property type="match status" value="1"/>
</dbReference>
<dbReference type="SUPFAM" id="SSF52540">
    <property type="entry name" value="P-loop containing nucleoside triphosphate hydrolases"/>
    <property type="match status" value="2"/>
</dbReference>
<dbReference type="PROSITE" id="PS50893">
    <property type="entry name" value="ABC_TRANSPORTER_2"/>
    <property type="match status" value="1"/>
</dbReference>
<sequence>MVEFKNIVKYFPDIDKPILDSINLKIGEVKIFTVVGKNGEGKSTLAKIIAGLIEFDEGEILVNGIKQKNWNVDKAKNNGIYLVSQVPNLKMNLRVWEYLSIYWFGYEFFMPMNKSKTYKYYRWLMQFYKISFDLDKKIKDLNIKEIYFLLIIAALKENAKIIIFDESAAYFSQKEAQAFIKLLVLLKKSGVASLFITHSEITDAIKFSDEFIILKDGKCFRTVNKESILSKLESSSDKVFVANINCNKFEKDPIKFNLFFEDFWKYDVSFSLNKRGVLGIIGEEAVIKTWEKLFLGELLFVGCIKIDGIRYERINIFECKAGFLPLGIGNLFPDNSSILDNFLAKFMNFENKIFIRQSYINQIKDFFKKKMEFYSEEKIYRILYSKSLAFSGGTLKKFALYREMYIAKSFLICFSPLSNLDHKAYNEMSVAIRNYSKEKPVLLITSNLDELLLLSDNILAMKMGEVLLNVSREKISKEKLKELLFL</sequence>
<keyword id="KW-0067">ATP-binding</keyword>
<keyword id="KW-0547">Nucleotide-binding</keyword>
<keyword id="KW-1185">Reference proteome</keyword>
<keyword id="KW-0677">Repeat</keyword>
<keyword id="KW-0813">Transport</keyword>
<evidence type="ECO:0000255" key="1">
    <source>
        <dbReference type="PROSITE-ProRule" id="PRU00434"/>
    </source>
</evidence>
<evidence type="ECO:0000305" key="2"/>
<gene>
    <name type="ordered locus">BB_0318</name>
</gene>
<name>Y318_BORBU</name>
<feature type="chain" id="PRO_0000093228" description="Uncharacterized ABC transporter ATP-binding protein BB_0318">
    <location>
        <begin position="1"/>
        <end position="486"/>
    </location>
</feature>
<feature type="domain" description="ABC transporter 1" evidence="1">
    <location>
        <begin position="2"/>
        <end position="241"/>
    </location>
</feature>
<feature type="domain" description="ABC transporter 2" evidence="1">
    <location>
        <begin position="249"/>
        <end position="486"/>
    </location>
</feature>
<feature type="binding site" evidence="1">
    <location>
        <begin position="36"/>
        <end position="43"/>
    </location>
    <ligand>
        <name>ATP</name>
        <dbReference type="ChEBI" id="CHEBI:30616"/>
    </ligand>
</feature>